<evidence type="ECO:0000250" key="1"/>
<evidence type="ECO:0000305" key="2"/>
<feature type="chain" id="PRO_0000060418" description="tRNA (guanine-N(1)-)-methyltransferase">
    <location>
        <begin position="1"/>
        <end position="225"/>
    </location>
</feature>
<feature type="binding site" evidence="1">
    <location>
        <position position="109"/>
    </location>
    <ligand>
        <name>S-adenosyl-L-methionine</name>
        <dbReference type="ChEBI" id="CHEBI:59789"/>
    </ligand>
</feature>
<feature type="binding site" evidence="1">
    <location>
        <begin position="128"/>
        <end position="133"/>
    </location>
    <ligand>
        <name>S-adenosyl-L-methionine</name>
        <dbReference type="ChEBI" id="CHEBI:59789"/>
    </ligand>
</feature>
<comment type="function">
    <text evidence="1">Specifically methylates guanosine-37 in various tRNAs.</text>
</comment>
<comment type="catalytic activity">
    <reaction>
        <text>guanosine(37) in tRNA + S-adenosyl-L-methionine = N(1)-methylguanosine(37) in tRNA + S-adenosyl-L-homocysteine + H(+)</text>
        <dbReference type="Rhea" id="RHEA:36899"/>
        <dbReference type="Rhea" id="RHEA-COMP:10145"/>
        <dbReference type="Rhea" id="RHEA-COMP:10147"/>
        <dbReference type="ChEBI" id="CHEBI:15378"/>
        <dbReference type="ChEBI" id="CHEBI:57856"/>
        <dbReference type="ChEBI" id="CHEBI:59789"/>
        <dbReference type="ChEBI" id="CHEBI:73542"/>
        <dbReference type="ChEBI" id="CHEBI:74269"/>
        <dbReference type="EC" id="2.1.1.228"/>
    </reaction>
</comment>
<comment type="subunit">
    <text evidence="1">Homodimer.</text>
</comment>
<comment type="subcellular location">
    <subcellularLocation>
        <location evidence="2">Cytoplasm</location>
    </subcellularLocation>
</comment>
<comment type="similarity">
    <text evidence="2">Belongs to the RNA methyltransferase TrmD family.</text>
</comment>
<reference key="1">
    <citation type="journal article" date="2001" name="Nucleic Acids Res.">
        <title>The complete genome sequence of the murine respiratory pathogen Mycoplasma pulmonis.</title>
        <authorList>
            <person name="Chambaud I."/>
            <person name="Heilig R."/>
            <person name="Ferris S."/>
            <person name="Barbe V."/>
            <person name="Samson D."/>
            <person name="Galisson F."/>
            <person name="Moszer I."/>
            <person name="Dybvig K."/>
            <person name="Wroblewski H."/>
            <person name="Viari A."/>
            <person name="Rocha E.P.C."/>
            <person name="Blanchard A."/>
        </authorList>
    </citation>
    <scope>NUCLEOTIDE SEQUENCE [LARGE SCALE GENOMIC DNA]</scope>
    <source>
        <strain>UAB CTIP</strain>
    </source>
</reference>
<gene>
    <name type="primary">trmD</name>
    <name type="ordered locus">MYPU_4680</name>
</gene>
<accession>Q98Q98</accession>
<sequence>MLKINFLTIFPKYFDCFLKESIIGKAIERKKISINVIDFREFSENKHKKVDDSVYGGGQGMLLQVQPIAKALKTLKGLKILVSPQGKLFNQEIAKEIVKNHSEITFVSGRYEGFDERILNYIDIELSIGDYILTGGELPSMVMADSIIRLWEDVIKKESYENESFENNLLDYPQYTRPRVFEGFEVPEILLNGNHKEIEKWRKQKQIEKTKINRPDLYERFKNEK</sequence>
<keyword id="KW-0963">Cytoplasm</keyword>
<keyword id="KW-0489">Methyltransferase</keyword>
<keyword id="KW-1185">Reference proteome</keyword>
<keyword id="KW-0949">S-adenosyl-L-methionine</keyword>
<keyword id="KW-0808">Transferase</keyword>
<keyword id="KW-0819">tRNA processing</keyword>
<proteinExistence type="inferred from homology"/>
<dbReference type="EC" id="2.1.1.228"/>
<dbReference type="EMBL" id="AL445564">
    <property type="protein sequence ID" value="CAC13641.1"/>
    <property type="molecule type" value="Genomic_DNA"/>
</dbReference>
<dbReference type="PIR" id="D90570">
    <property type="entry name" value="D90570"/>
</dbReference>
<dbReference type="RefSeq" id="WP_010925269.1">
    <property type="nucleotide sequence ID" value="NC_002771.1"/>
</dbReference>
<dbReference type="SMR" id="Q98Q98"/>
<dbReference type="STRING" id="272635.gene:17577069"/>
<dbReference type="KEGG" id="mpu:MYPU_4680"/>
<dbReference type="eggNOG" id="COG0336">
    <property type="taxonomic scope" value="Bacteria"/>
</dbReference>
<dbReference type="HOGENOM" id="CLU_047363_0_1_14"/>
<dbReference type="BioCyc" id="MPUL272635:G1GT6-472-MONOMER"/>
<dbReference type="Proteomes" id="UP000000528">
    <property type="component" value="Chromosome"/>
</dbReference>
<dbReference type="GO" id="GO:0005829">
    <property type="term" value="C:cytosol"/>
    <property type="evidence" value="ECO:0007669"/>
    <property type="project" value="TreeGrafter"/>
</dbReference>
<dbReference type="GO" id="GO:0052906">
    <property type="term" value="F:tRNA (guanine(37)-N1)-methyltransferase activity"/>
    <property type="evidence" value="ECO:0007669"/>
    <property type="project" value="UniProtKB-UniRule"/>
</dbReference>
<dbReference type="GO" id="GO:0002939">
    <property type="term" value="P:tRNA N1-guanine methylation"/>
    <property type="evidence" value="ECO:0007669"/>
    <property type="project" value="TreeGrafter"/>
</dbReference>
<dbReference type="CDD" id="cd18080">
    <property type="entry name" value="TrmD-like"/>
    <property type="match status" value="1"/>
</dbReference>
<dbReference type="Gene3D" id="3.40.1280.10">
    <property type="match status" value="1"/>
</dbReference>
<dbReference type="Gene3D" id="1.10.1270.20">
    <property type="entry name" value="tRNA(m1g37)methyltransferase, domain 2"/>
    <property type="match status" value="1"/>
</dbReference>
<dbReference type="HAMAP" id="MF_00605">
    <property type="entry name" value="TrmD"/>
    <property type="match status" value="1"/>
</dbReference>
<dbReference type="InterPro" id="IPR029028">
    <property type="entry name" value="Alpha/beta_knot_MTases"/>
</dbReference>
<dbReference type="InterPro" id="IPR023148">
    <property type="entry name" value="tRNA_m1G_MeTrfase_C_sf"/>
</dbReference>
<dbReference type="InterPro" id="IPR002649">
    <property type="entry name" value="tRNA_m1G_MeTrfase_TrmD"/>
</dbReference>
<dbReference type="InterPro" id="IPR029026">
    <property type="entry name" value="tRNA_m1G_MTases_N"/>
</dbReference>
<dbReference type="InterPro" id="IPR016009">
    <property type="entry name" value="tRNA_MeTrfase_TRMD/TRM10"/>
</dbReference>
<dbReference type="NCBIfam" id="NF000648">
    <property type="entry name" value="PRK00026.1"/>
    <property type="match status" value="1"/>
</dbReference>
<dbReference type="NCBIfam" id="TIGR00088">
    <property type="entry name" value="trmD"/>
    <property type="match status" value="1"/>
</dbReference>
<dbReference type="PANTHER" id="PTHR46417">
    <property type="entry name" value="TRNA (GUANINE-N(1)-)-METHYLTRANSFERASE"/>
    <property type="match status" value="1"/>
</dbReference>
<dbReference type="PANTHER" id="PTHR46417:SF1">
    <property type="entry name" value="TRNA (GUANINE-N(1)-)-METHYLTRANSFERASE"/>
    <property type="match status" value="1"/>
</dbReference>
<dbReference type="Pfam" id="PF01746">
    <property type="entry name" value="tRNA_m1G_MT"/>
    <property type="match status" value="1"/>
</dbReference>
<dbReference type="PIRSF" id="PIRSF000386">
    <property type="entry name" value="tRNA_mtase"/>
    <property type="match status" value="1"/>
</dbReference>
<dbReference type="SUPFAM" id="SSF75217">
    <property type="entry name" value="alpha/beta knot"/>
    <property type="match status" value="1"/>
</dbReference>
<name>TRMD_MYCPU</name>
<protein>
    <recommendedName>
        <fullName>tRNA (guanine-N(1)-)-methyltransferase</fullName>
        <ecNumber>2.1.1.228</ecNumber>
    </recommendedName>
    <alternativeName>
        <fullName>M1G-methyltransferase</fullName>
    </alternativeName>
    <alternativeName>
        <fullName>tRNA [GM37] methyltransferase</fullName>
    </alternativeName>
</protein>
<organism>
    <name type="scientific">Mycoplasmopsis pulmonis (strain UAB CTIP)</name>
    <name type="common">Mycoplasma pulmonis</name>
    <dbReference type="NCBI Taxonomy" id="272635"/>
    <lineage>
        <taxon>Bacteria</taxon>
        <taxon>Bacillati</taxon>
        <taxon>Mycoplasmatota</taxon>
        <taxon>Mycoplasmoidales</taxon>
        <taxon>Metamycoplasmataceae</taxon>
        <taxon>Mycoplasmopsis</taxon>
    </lineage>
</organism>